<organism>
    <name type="scientific">Homo sapiens</name>
    <name type="common">Human</name>
    <dbReference type="NCBI Taxonomy" id="9606"/>
    <lineage>
        <taxon>Eukaryota</taxon>
        <taxon>Metazoa</taxon>
        <taxon>Chordata</taxon>
        <taxon>Craniata</taxon>
        <taxon>Vertebrata</taxon>
        <taxon>Euteleostomi</taxon>
        <taxon>Mammalia</taxon>
        <taxon>Eutheria</taxon>
        <taxon>Euarchontoglires</taxon>
        <taxon>Primates</taxon>
        <taxon>Haplorrhini</taxon>
        <taxon>Catarrhini</taxon>
        <taxon>Hominidae</taxon>
        <taxon>Homo</taxon>
    </lineage>
</organism>
<proteinExistence type="evidence at protein level"/>
<feature type="transit peptide" description="Mitochondrion" evidence="1">
    <location>
        <begin position="1"/>
        <end position="71"/>
    </location>
</feature>
<feature type="chain" id="PRO_0000087714" description="Small ribosomal subunit protein bS1m">
    <location>
        <begin position="72"/>
        <end position="187"/>
    </location>
</feature>
<feature type="modified residue" description="Phosphoserine" evidence="2">
    <location>
        <position position="73"/>
    </location>
</feature>
<feature type="modified residue" description="N6-acetyllysine" evidence="7">
    <location>
        <position position="133"/>
    </location>
</feature>
<feature type="sequence variant" id="VAR_052047" description="In dbSNP:rs16919579.">
    <original>R</original>
    <variation>W</variation>
    <location>
        <position position="103"/>
    </location>
</feature>
<feature type="sequence variant" id="VAR_084507" description="In COXPD47; strong decrease in mitochondrial translation and in oxidative phosphorylation biogenesis; this phenotype could be reversed in patient's fibroblasts by transfection with the wild-type protein; dbSNP:rs1808705345." evidence="4">
    <original>K</original>
    <variation>R</variation>
    <location>
        <position position="119"/>
    </location>
</feature>
<feature type="helix" evidence="8">
    <location>
        <begin position="80"/>
        <end position="85"/>
    </location>
</feature>
<feature type="helix" evidence="8">
    <location>
        <begin position="88"/>
        <end position="92"/>
    </location>
</feature>
<feature type="strand" evidence="8">
    <location>
        <begin position="98"/>
        <end position="108"/>
    </location>
</feature>
<feature type="strand" evidence="8">
    <location>
        <begin position="111"/>
        <end position="115"/>
    </location>
</feature>
<feature type="strand" evidence="8">
    <location>
        <begin position="117"/>
        <end position="120"/>
    </location>
</feature>
<feature type="strand" evidence="8">
    <location>
        <begin position="122"/>
        <end position="125"/>
    </location>
</feature>
<feature type="strand" evidence="8">
    <location>
        <begin position="128"/>
        <end position="130"/>
    </location>
</feature>
<feature type="helix" evidence="8">
    <location>
        <begin position="131"/>
        <end position="133"/>
    </location>
</feature>
<feature type="strand" evidence="8">
    <location>
        <begin position="139"/>
        <end position="148"/>
    </location>
</feature>
<feature type="strand" evidence="8">
    <location>
        <begin position="166"/>
        <end position="172"/>
    </location>
</feature>
<accession>Q9Y2Q9</accession>
<accession>B2RDZ7</accession>
<accession>Q96Q21</accession>
<gene>
    <name type="primary">MRPS28</name>
    <name type="synonym">MRPS35</name>
    <name type="ORF">HSPC007</name>
</gene>
<reference key="1">
    <citation type="journal article" date="2000" name="Genome Res.">
        <title>Cloning and functional analysis of cDNAs with open reading frames for 300 previously undefined genes expressed in CD34+ hematopoietic stem/progenitor cells.</title>
        <authorList>
            <person name="Zhang Q.-H."/>
            <person name="Ye M."/>
            <person name="Wu X.-Y."/>
            <person name="Ren S.-X."/>
            <person name="Zhao M."/>
            <person name="Zhao C.-J."/>
            <person name="Fu G."/>
            <person name="Shen Y."/>
            <person name="Fan H.-Y."/>
            <person name="Lu G."/>
            <person name="Zhong M."/>
            <person name="Xu X.-R."/>
            <person name="Han Z.-G."/>
            <person name="Zhang J.-W."/>
            <person name="Tao J."/>
            <person name="Huang Q.-H."/>
            <person name="Zhou J."/>
            <person name="Hu G.-X."/>
            <person name="Gu J."/>
            <person name="Chen S.-J."/>
            <person name="Chen Z."/>
        </authorList>
    </citation>
    <scope>NUCLEOTIDE SEQUENCE [LARGE SCALE MRNA]</scope>
    <source>
        <tissue>Umbilical cord blood</tissue>
    </source>
</reference>
<reference key="2">
    <citation type="journal article" date="2004" name="Nat. Genet.">
        <title>Complete sequencing and characterization of 21,243 full-length human cDNAs.</title>
        <authorList>
            <person name="Ota T."/>
            <person name="Suzuki Y."/>
            <person name="Nishikawa T."/>
            <person name="Otsuki T."/>
            <person name="Sugiyama T."/>
            <person name="Irie R."/>
            <person name="Wakamatsu A."/>
            <person name="Hayashi K."/>
            <person name="Sato H."/>
            <person name="Nagai K."/>
            <person name="Kimura K."/>
            <person name="Makita H."/>
            <person name="Sekine M."/>
            <person name="Obayashi M."/>
            <person name="Nishi T."/>
            <person name="Shibahara T."/>
            <person name="Tanaka T."/>
            <person name="Ishii S."/>
            <person name="Yamamoto J."/>
            <person name="Saito K."/>
            <person name="Kawai Y."/>
            <person name="Isono Y."/>
            <person name="Nakamura Y."/>
            <person name="Nagahari K."/>
            <person name="Murakami K."/>
            <person name="Yasuda T."/>
            <person name="Iwayanagi T."/>
            <person name="Wagatsuma M."/>
            <person name="Shiratori A."/>
            <person name="Sudo H."/>
            <person name="Hosoiri T."/>
            <person name="Kaku Y."/>
            <person name="Kodaira H."/>
            <person name="Kondo H."/>
            <person name="Sugawara M."/>
            <person name="Takahashi M."/>
            <person name="Kanda K."/>
            <person name="Yokoi T."/>
            <person name="Furuya T."/>
            <person name="Kikkawa E."/>
            <person name="Omura Y."/>
            <person name="Abe K."/>
            <person name="Kamihara K."/>
            <person name="Katsuta N."/>
            <person name="Sato K."/>
            <person name="Tanikawa M."/>
            <person name="Yamazaki M."/>
            <person name="Ninomiya K."/>
            <person name="Ishibashi T."/>
            <person name="Yamashita H."/>
            <person name="Murakawa K."/>
            <person name="Fujimori K."/>
            <person name="Tanai H."/>
            <person name="Kimata M."/>
            <person name="Watanabe M."/>
            <person name="Hiraoka S."/>
            <person name="Chiba Y."/>
            <person name="Ishida S."/>
            <person name="Ono Y."/>
            <person name="Takiguchi S."/>
            <person name="Watanabe S."/>
            <person name="Yosida M."/>
            <person name="Hotuta T."/>
            <person name="Kusano J."/>
            <person name="Kanehori K."/>
            <person name="Takahashi-Fujii A."/>
            <person name="Hara H."/>
            <person name="Tanase T.-O."/>
            <person name="Nomura Y."/>
            <person name="Togiya S."/>
            <person name="Komai F."/>
            <person name="Hara R."/>
            <person name="Takeuchi K."/>
            <person name="Arita M."/>
            <person name="Imose N."/>
            <person name="Musashino K."/>
            <person name="Yuuki H."/>
            <person name="Oshima A."/>
            <person name="Sasaki N."/>
            <person name="Aotsuka S."/>
            <person name="Yoshikawa Y."/>
            <person name="Matsunawa H."/>
            <person name="Ichihara T."/>
            <person name="Shiohata N."/>
            <person name="Sano S."/>
            <person name="Moriya S."/>
            <person name="Momiyama H."/>
            <person name="Satoh N."/>
            <person name="Takami S."/>
            <person name="Terashima Y."/>
            <person name="Suzuki O."/>
            <person name="Nakagawa S."/>
            <person name="Senoh A."/>
            <person name="Mizoguchi H."/>
            <person name="Goto Y."/>
            <person name="Shimizu F."/>
            <person name="Wakebe H."/>
            <person name="Hishigaki H."/>
            <person name="Watanabe T."/>
            <person name="Sugiyama A."/>
            <person name="Takemoto M."/>
            <person name="Kawakami B."/>
            <person name="Yamazaki M."/>
            <person name="Watanabe K."/>
            <person name="Kumagai A."/>
            <person name="Itakura S."/>
            <person name="Fukuzumi Y."/>
            <person name="Fujimori Y."/>
            <person name="Komiyama M."/>
            <person name="Tashiro H."/>
            <person name="Tanigami A."/>
            <person name="Fujiwara T."/>
            <person name="Ono T."/>
            <person name="Yamada K."/>
            <person name="Fujii Y."/>
            <person name="Ozaki K."/>
            <person name="Hirao M."/>
            <person name="Ohmori Y."/>
            <person name="Kawabata A."/>
            <person name="Hikiji T."/>
            <person name="Kobatake N."/>
            <person name="Inagaki H."/>
            <person name="Ikema Y."/>
            <person name="Okamoto S."/>
            <person name="Okitani R."/>
            <person name="Kawakami T."/>
            <person name="Noguchi S."/>
            <person name="Itoh T."/>
            <person name="Shigeta K."/>
            <person name="Senba T."/>
            <person name="Matsumura K."/>
            <person name="Nakajima Y."/>
            <person name="Mizuno T."/>
            <person name="Morinaga M."/>
            <person name="Sasaki M."/>
            <person name="Togashi T."/>
            <person name="Oyama M."/>
            <person name="Hata H."/>
            <person name="Watanabe M."/>
            <person name="Komatsu T."/>
            <person name="Mizushima-Sugano J."/>
            <person name="Satoh T."/>
            <person name="Shirai Y."/>
            <person name="Takahashi Y."/>
            <person name="Nakagawa K."/>
            <person name="Okumura K."/>
            <person name="Nagase T."/>
            <person name="Nomura N."/>
            <person name="Kikuchi H."/>
            <person name="Masuho Y."/>
            <person name="Yamashita R."/>
            <person name="Nakai K."/>
            <person name="Yada T."/>
            <person name="Nakamura Y."/>
            <person name="Ohara O."/>
            <person name="Isogai T."/>
            <person name="Sugano S."/>
        </authorList>
    </citation>
    <scope>NUCLEOTIDE SEQUENCE [LARGE SCALE MRNA]</scope>
    <source>
        <tissue>Brain</tissue>
    </source>
</reference>
<reference key="3">
    <citation type="submission" date="2005-07" db="EMBL/GenBank/DDBJ databases">
        <authorList>
            <person name="Mural R.J."/>
            <person name="Istrail S."/>
            <person name="Sutton G.G."/>
            <person name="Florea L."/>
            <person name="Halpern A.L."/>
            <person name="Mobarry C.M."/>
            <person name="Lippert R."/>
            <person name="Walenz B."/>
            <person name="Shatkay H."/>
            <person name="Dew I."/>
            <person name="Miller J.R."/>
            <person name="Flanigan M.J."/>
            <person name="Edwards N.J."/>
            <person name="Bolanos R."/>
            <person name="Fasulo D."/>
            <person name="Halldorsson B.V."/>
            <person name="Hannenhalli S."/>
            <person name="Turner R."/>
            <person name="Yooseph S."/>
            <person name="Lu F."/>
            <person name="Nusskern D.R."/>
            <person name="Shue B.C."/>
            <person name="Zheng X.H."/>
            <person name="Zhong F."/>
            <person name="Delcher A.L."/>
            <person name="Huson D.H."/>
            <person name="Kravitz S.A."/>
            <person name="Mouchard L."/>
            <person name="Reinert K."/>
            <person name="Remington K.A."/>
            <person name="Clark A.G."/>
            <person name="Waterman M.S."/>
            <person name="Eichler E.E."/>
            <person name="Adams M.D."/>
            <person name="Hunkapiller M.W."/>
            <person name="Myers E.W."/>
            <person name="Venter J.C."/>
        </authorList>
    </citation>
    <scope>NUCLEOTIDE SEQUENCE [LARGE SCALE GENOMIC DNA]</scope>
</reference>
<reference key="4">
    <citation type="journal article" date="2004" name="Genome Res.">
        <title>The status, quality, and expansion of the NIH full-length cDNA project: the Mammalian Gene Collection (MGC).</title>
        <authorList>
            <consortium name="The MGC Project Team"/>
        </authorList>
    </citation>
    <scope>NUCLEOTIDE SEQUENCE [LARGE SCALE MRNA]</scope>
    <source>
        <tissue>Uterus</tissue>
    </source>
</reference>
<reference key="5">
    <citation type="journal article" date="2001" name="Genomics">
        <title>The human mitochondrial ribosomal protein genes: mapping of 54 genes to the chromosomes and implications for human disorders.</title>
        <authorList>
            <person name="Kenmochi N."/>
            <person name="Suzuki T."/>
            <person name="Uechi T."/>
            <person name="Magoori M."/>
            <person name="Kuniba M."/>
            <person name="Higa S."/>
            <person name="Watanabe K."/>
            <person name="Tanaka T."/>
        </authorList>
    </citation>
    <scope>NUCLEOTIDE SEQUENCE [GENOMIC DNA] OF 40-71</scope>
</reference>
<reference key="6">
    <citation type="journal article" date="2000" name="J. Biol. Chem.">
        <title>A proteomics approach to the identification of mammalian mitochondrial small subunit ribosomal proteins.</title>
        <authorList>
            <person name="Koc E.C."/>
            <person name="Burkhart W."/>
            <person name="Blackburn K."/>
            <person name="Moseley A."/>
            <person name="Koc H."/>
            <person name="Spremulli L.L."/>
        </authorList>
    </citation>
    <scope>IDENTIFICATION</scope>
</reference>
<reference key="7">
    <citation type="journal article" date="2009" name="Science">
        <title>Lysine acetylation targets protein complexes and co-regulates major cellular functions.</title>
        <authorList>
            <person name="Choudhary C."/>
            <person name="Kumar C."/>
            <person name="Gnad F."/>
            <person name="Nielsen M.L."/>
            <person name="Rehman M."/>
            <person name="Walther T.C."/>
            <person name="Olsen J.V."/>
            <person name="Mann M."/>
        </authorList>
    </citation>
    <scope>ACETYLATION [LARGE SCALE ANALYSIS] AT LYS-133</scope>
    <scope>IDENTIFICATION BY MASS SPECTROMETRY [LARGE SCALE ANALYSIS]</scope>
</reference>
<reference key="8">
    <citation type="journal article" date="2011" name="BMC Syst. Biol.">
        <title>Initial characterization of the human central proteome.</title>
        <authorList>
            <person name="Burkard T.R."/>
            <person name="Planyavsky M."/>
            <person name="Kaupe I."/>
            <person name="Breitwieser F.P."/>
            <person name="Buerckstuemmer T."/>
            <person name="Bennett K.L."/>
            <person name="Superti-Furga G."/>
            <person name="Colinge J."/>
        </authorList>
    </citation>
    <scope>IDENTIFICATION BY MASS SPECTROMETRY [LARGE SCALE ANALYSIS]</scope>
</reference>
<reference key="9">
    <citation type="journal article" date="2013" name="J. Proteome Res.">
        <title>Toward a comprehensive characterization of a human cancer cell phosphoproteome.</title>
        <authorList>
            <person name="Zhou H."/>
            <person name="Di Palma S."/>
            <person name="Preisinger C."/>
            <person name="Peng M."/>
            <person name="Polat A.N."/>
            <person name="Heck A.J."/>
            <person name="Mohammed S."/>
        </authorList>
    </citation>
    <scope>IDENTIFICATION BY MASS SPECTROMETRY [LARGE SCALE ANALYSIS]</scope>
    <source>
        <tissue>Erythroleukemia</tissue>
    </source>
</reference>
<reference key="10">
    <citation type="journal article" date="2015" name="Proteomics">
        <title>N-terminome analysis of the human mitochondrial proteome.</title>
        <authorList>
            <person name="Vaca Jacome A.S."/>
            <person name="Rabilloud T."/>
            <person name="Schaeffer-Reiss C."/>
            <person name="Rompais M."/>
            <person name="Ayoub D."/>
            <person name="Lane L."/>
            <person name="Bairoch A."/>
            <person name="Van Dorsselaer A."/>
            <person name="Carapito C."/>
        </authorList>
    </citation>
    <scope>IDENTIFICATION BY MASS SPECTROMETRY [LARGE SCALE ANALYSIS]</scope>
</reference>
<reference key="11">
    <citation type="journal article" date="2019" name="Hum. Mol. Genet.">
        <title>Mutations in the MRPS28 gene encoding the small mitoribosomal subunit protein bS1m in a patient with intrauterine growth retardation, craniofacial dysmorphism and multisystemic involvement.</title>
        <authorList>
            <person name="Pulman J."/>
            <person name="Ruzzenente B."/>
            <person name="Bianchi L."/>
            <person name="Rio M."/>
            <person name="Boddaert N."/>
            <person name="Munnich A."/>
            <person name="Roetig A."/>
            <person name="Metodiev M.D."/>
        </authorList>
    </citation>
    <scope>INVOLVEMENT IN COXPD47</scope>
    <scope>FUNCTION</scope>
    <scope>VARIANT COXPD47 ARG-119</scope>
    <scope>CHARACTERIZATION OF VARIANT COXPD47 ARG-119</scope>
</reference>
<reference key="12">
    <citation type="journal article" date="2015" name="Science">
        <title>Ribosome. The structure of the human mitochondrial ribosome.</title>
        <authorList>
            <person name="Amunts A."/>
            <person name="Brown A."/>
            <person name="Toots J."/>
            <person name="Scheres S.H."/>
            <person name="Ramakrishnan V."/>
        </authorList>
    </citation>
    <scope>STRUCTURE BY ELECTRON MICROSCOPY (3.50 ANGSTROMS)</scope>
    <scope>SUBUNIT</scope>
    <scope>SUBCELLULAR LOCATION</scope>
</reference>
<protein>
    <recommendedName>
        <fullName evidence="5">Small ribosomal subunit protein bS1m</fullName>
    </recommendedName>
    <alternativeName>
        <fullName>28S ribosomal protein S28, mitochondrial</fullName>
        <shortName>MRP-S28</shortName>
        <shortName>S28mt</shortName>
    </alternativeName>
    <alternativeName>
        <fullName>28S ribosomal protein S35, mitochondrial</fullName>
        <shortName>MRP-S35</shortName>
        <shortName>S35mt</shortName>
    </alternativeName>
</protein>
<sequence length="187" mass="20843">MAALCRTRAVAAESHFLRVFLFFRPFRGVGTESGSESGSSNAKEPKTRAGGFASALERHSELLQKVEPLQKGSPKNVESFASMLRHSPLTQMGPAKDKLVIGRIFHIVENDLYIDFGGKFHCVCRRPEVDGEKYQKGTRVRLRLLDLELTSRFLGATTDTTVLEANAVLLGIQESKDSRSKEEHHEK</sequence>
<keyword id="KW-0002">3D-structure</keyword>
<keyword id="KW-0007">Acetylation</keyword>
<keyword id="KW-0225">Disease variant</keyword>
<keyword id="KW-0496">Mitochondrion</keyword>
<keyword id="KW-0597">Phosphoprotein</keyword>
<keyword id="KW-1274">Primary mitochondrial disease</keyword>
<keyword id="KW-1267">Proteomics identification</keyword>
<keyword id="KW-1185">Reference proteome</keyword>
<keyword id="KW-0687">Ribonucleoprotein</keyword>
<keyword id="KW-0689">Ribosomal protein</keyword>
<keyword id="KW-0809">Transit peptide</keyword>
<name>RT28_HUMAN</name>
<evidence type="ECO:0000250" key="1"/>
<evidence type="ECO:0000250" key="2">
    <source>
        <dbReference type="UniProtKB" id="Q9CY16"/>
    </source>
</evidence>
<evidence type="ECO:0000269" key="3">
    <source>
    </source>
</evidence>
<evidence type="ECO:0000269" key="4">
    <source>
    </source>
</evidence>
<evidence type="ECO:0000303" key="5">
    <source>
    </source>
</evidence>
<evidence type="ECO:0000305" key="6"/>
<evidence type="ECO:0007744" key="7">
    <source>
    </source>
</evidence>
<evidence type="ECO:0007829" key="8">
    <source>
        <dbReference type="PDB" id="8CSS"/>
    </source>
</evidence>
<dbReference type="EMBL" id="AF070663">
    <property type="protein sequence ID" value="AAD20969.1"/>
    <property type="molecule type" value="mRNA"/>
</dbReference>
<dbReference type="EMBL" id="AK315739">
    <property type="protein sequence ID" value="BAG38094.1"/>
    <property type="molecule type" value="mRNA"/>
</dbReference>
<dbReference type="EMBL" id="CH471068">
    <property type="protein sequence ID" value="EAW87069.1"/>
    <property type="molecule type" value="Genomic_DNA"/>
</dbReference>
<dbReference type="EMBL" id="BC010150">
    <property type="protein sequence ID" value="AAH10150.1"/>
    <property type="molecule type" value="mRNA"/>
</dbReference>
<dbReference type="EMBL" id="AB061209">
    <property type="protein sequence ID" value="BAB54959.1"/>
    <property type="molecule type" value="Genomic_DNA"/>
</dbReference>
<dbReference type="CCDS" id="CCDS6226.1"/>
<dbReference type="RefSeq" id="NP_054737.1">
    <property type="nucleotide sequence ID" value="NM_014018.3"/>
</dbReference>
<dbReference type="PDB" id="3J9M">
    <property type="method" value="EM"/>
    <property type="resolution" value="3.50 A"/>
    <property type="chains" value="AW=1-187"/>
</dbReference>
<dbReference type="PDB" id="6NU2">
    <property type="method" value="EM"/>
    <property type="resolution" value="3.90 A"/>
    <property type="chains" value="AW=77-173"/>
</dbReference>
<dbReference type="PDB" id="6NU3">
    <property type="method" value="EM"/>
    <property type="resolution" value="4.40 A"/>
    <property type="chains" value="AW=1-187"/>
</dbReference>
<dbReference type="PDB" id="6RW4">
    <property type="method" value="EM"/>
    <property type="resolution" value="2.97 A"/>
    <property type="chains" value="W=1-187"/>
</dbReference>
<dbReference type="PDB" id="6RW5">
    <property type="method" value="EM"/>
    <property type="resolution" value="3.14 A"/>
    <property type="chains" value="W=1-187"/>
</dbReference>
<dbReference type="PDB" id="6VLZ">
    <property type="method" value="EM"/>
    <property type="resolution" value="2.97 A"/>
    <property type="chains" value="AW=1-187"/>
</dbReference>
<dbReference type="PDB" id="6VMI">
    <property type="method" value="EM"/>
    <property type="resolution" value="2.96 A"/>
    <property type="chains" value="AW=1-187"/>
</dbReference>
<dbReference type="PDB" id="6ZM5">
    <property type="method" value="EM"/>
    <property type="resolution" value="2.89 A"/>
    <property type="chains" value="AW=1-187"/>
</dbReference>
<dbReference type="PDB" id="6ZM6">
    <property type="method" value="EM"/>
    <property type="resolution" value="2.59 A"/>
    <property type="chains" value="AW=1-187"/>
</dbReference>
<dbReference type="PDB" id="6ZS9">
    <property type="method" value="EM"/>
    <property type="resolution" value="4.00 A"/>
    <property type="chains" value="AW=1-187"/>
</dbReference>
<dbReference type="PDB" id="6ZSA">
    <property type="method" value="EM"/>
    <property type="resolution" value="4.00 A"/>
    <property type="chains" value="AW=1-187"/>
</dbReference>
<dbReference type="PDB" id="6ZSB">
    <property type="method" value="EM"/>
    <property type="resolution" value="4.50 A"/>
    <property type="chains" value="AW=1-187"/>
</dbReference>
<dbReference type="PDB" id="6ZSC">
    <property type="method" value="EM"/>
    <property type="resolution" value="3.50 A"/>
    <property type="chains" value="AW=1-187"/>
</dbReference>
<dbReference type="PDB" id="6ZSD">
    <property type="method" value="EM"/>
    <property type="resolution" value="3.70 A"/>
    <property type="chains" value="AW=1-187"/>
</dbReference>
<dbReference type="PDB" id="6ZSE">
    <property type="method" value="EM"/>
    <property type="resolution" value="5.00 A"/>
    <property type="chains" value="AW=1-187"/>
</dbReference>
<dbReference type="PDB" id="6ZSG">
    <property type="method" value="EM"/>
    <property type="resolution" value="4.00 A"/>
    <property type="chains" value="AW=1-187"/>
</dbReference>
<dbReference type="PDB" id="7A5F">
    <property type="method" value="EM"/>
    <property type="resolution" value="4.40 A"/>
    <property type="chains" value="W6=1-187"/>
</dbReference>
<dbReference type="PDB" id="7A5G">
    <property type="method" value="EM"/>
    <property type="resolution" value="4.33 A"/>
    <property type="chains" value="W6=1-187"/>
</dbReference>
<dbReference type="PDB" id="7A5I">
    <property type="method" value="EM"/>
    <property type="resolution" value="3.70 A"/>
    <property type="chains" value="W6=1-187"/>
</dbReference>
<dbReference type="PDB" id="7A5K">
    <property type="method" value="EM"/>
    <property type="resolution" value="3.70 A"/>
    <property type="chains" value="W6=1-187"/>
</dbReference>
<dbReference type="PDB" id="7L08">
    <property type="method" value="EM"/>
    <property type="resolution" value="3.49 A"/>
    <property type="chains" value="AW=1-187"/>
</dbReference>
<dbReference type="PDB" id="7OG4">
    <property type="method" value="EM"/>
    <property type="resolution" value="3.80 A"/>
    <property type="chains" value="AW=1-187"/>
</dbReference>
<dbReference type="PDB" id="7P2E">
    <property type="method" value="EM"/>
    <property type="resolution" value="2.40 A"/>
    <property type="chains" value="W=1-187"/>
</dbReference>
<dbReference type="PDB" id="7PNX">
    <property type="method" value="EM"/>
    <property type="resolution" value="2.76 A"/>
    <property type="chains" value="W=1-187"/>
</dbReference>
<dbReference type="PDB" id="7PNY">
    <property type="method" value="EM"/>
    <property type="resolution" value="3.06 A"/>
    <property type="chains" value="W=1-187"/>
</dbReference>
<dbReference type="PDB" id="7PNZ">
    <property type="method" value="EM"/>
    <property type="resolution" value="3.09 A"/>
    <property type="chains" value="W=1-187"/>
</dbReference>
<dbReference type="PDB" id="7PO0">
    <property type="method" value="EM"/>
    <property type="resolution" value="2.90 A"/>
    <property type="chains" value="W=1-187"/>
</dbReference>
<dbReference type="PDB" id="7PO1">
    <property type="method" value="EM"/>
    <property type="resolution" value="2.92 A"/>
    <property type="chains" value="W=1-187"/>
</dbReference>
<dbReference type="PDB" id="7PO2">
    <property type="method" value="EM"/>
    <property type="resolution" value="3.09 A"/>
    <property type="chains" value="W=1-187"/>
</dbReference>
<dbReference type="PDB" id="7PO3">
    <property type="method" value="EM"/>
    <property type="resolution" value="2.92 A"/>
    <property type="chains" value="W=1-187"/>
</dbReference>
<dbReference type="PDB" id="7QI4">
    <property type="method" value="EM"/>
    <property type="resolution" value="2.21 A"/>
    <property type="chains" value="AW=1-187"/>
</dbReference>
<dbReference type="PDB" id="7QI5">
    <property type="method" value="EM"/>
    <property type="resolution" value="2.63 A"/>
    <property type="chains" value="AW=1-187"/>
</dbReference>
<dbReference type="PDB" id="7QI6">
    <property type="method" value="EM"/>
    <property type="resolution" value="2.98 A"/>
    <property type="chains" value="AW=1-187"/>
</dbReference>
<dbReference type="PDB" id="8ANY">
    <property type="method" value="EM"/>
    <property type="resolution" value="2.85 A"/>
    <property type="chains" value="AW=1-187"/>
</dbReference>
<dbReference type="PDB" id="8CSP">
    <property type="method" value="EM"/>
    <property type="resolution" value="2.66 A"/>
    <property type="chains" value="W=1-187"/>
</dbReference>
<dbReference type="PDB" id="8CSQ">
    <property type="method" value="EM"/>
    <property type="resolution" value="2.54 A"/>
    <property type="chains" value="W=1-187"/>
</dbReference>
<dbReference type="PDB" id="8CSR">
    <property type="method" value="EM"/>
    <property type="resolution" value="2.54 A"/>
    <property type="chains" value="W=1-187"/>
</dbReference>
<dbReference type="PDB" id="8CSS">
    <property type="method" value="EM"/>
    <property type="resolution" value="2.36 A"/>
    <property type="chains" value="W=1-187"/>
</dbReference>
<dbReference type="PDB" id="8CST">
    <property type="method" value="EM"/>
    <property type="resolution" value="2.85 A"/>
    <property type="chains" value="W=1-187"/>
</dbReference>
<dbReference type="PDB" id="8CSU">
    <property type="method" value="EM"/>
    <property type="resolution" value="3.03 A"/>
    <property type="chains" value="W=1-187"/>
</dbReference>
<dbReference type="PDB" id="8K2A">
    <property type="method" value="EM"/>
    <property type="resolution" value="2.90 A"/>
    <property type="chains" value="Sd=1-187"/>
</dbReference>
<dbReference type="PDB" id="8OIR">
    <property type="method" value="EM"/>
    <property type="resolution" value="3.10 A"/>
    <property type="chains" value="AW=1-187"/>
</dbReference>
<dbReference type="PDB" id="8OIS">
    <property type="method" value="EM"/>
    <property type="resolution" value="3.00 A"/>
    <property type="chains" value="AW=1-187"/>
</dbReference>
<dbReference type="PDB" id="8QRK">
    <property type="method" value="EM"/>
    <property type="resolution" value="6.69 A"/>
    <property type="chains" value="W=1-187"/>
</dbReference>
<dbReference type="PDB" id="8QRL">
    <property type="method" value="EM"/>
    <property type="resolution" value="3.34 A"/>
    <property type="chains" value="W=1-187"/>
</dbReference>
<dbReference type="PDB" id="8QRM">
    <property type="method" value="EM"/>
    <property type="resolution" value="3.05 A"/>
    <property type="chains" value="W=1-187"/>
</dbReference>
<dbReference type="PDB" id="8QRN">
    <property type="method" value="EM"/>
    <property type="resolution" value="2.98 A"/>
    <property type="chains" value="W=1-187"/>
</dbReference>
<dbReference type="PDB" id="8RRI">
    <property type="method" value="EM"/>
    <property type="resolution" value="2.40 A"/>
    <property type="chains" value="AW=1-187"/>
</dbReference>
<dbReference type="PDB" id="8XT0">
    <property type="method" value="EM"/>
    <property type="resolution" value="3.20 A"/>
    <property type="chains" value="Sd=1-187"/>
</dbReference>
<dbReference type="PDB" id="8XT2">
    <property type="method" value="EM"/>
    <property type="resolution" value="3.30 A"/>
    <property type="chains" value="Sd=1-187"/>
</dbReference>
<dbReference type="PDBsum" id="3J9M"/>
<dbReference type="PDBsum" id="6NU2"/>
<dbReference type="PDBsum" id="6NU3"/>
<dbReference type="PDBsum" id="6RW4"/>
<dbReference type="PDBsum" id="6RW5"/>
<dbReference type="PDBsum" id="6VLZ"/>
<dbReference type="PDBsum" id="6VMI"/>
<dbReference type="PDBsum" id="6ZM5"/>
<dbReference type="PDBsum" id="6ZM6"/>
<dbReference type="PDBsum" id="6ZS9"/>
<dbReference type="PDBsum" id="6ZSA"/>
<dbReference type="PDBsum" id="6ZSB"/>
<dbReference type="PDBsum" id="6ZSC"/>
<dbReference type="PDBsum" id="6ZSD"/>
<dbReference type="PDBsum" id="6ZSE"/>
<dbReference type="PDBsum" id="6ZSG"/>
<dbReference type="PDBsum" id="7A5F"/>
<dbReference type="PDBsum" id="7A5G"/>
<dbReference type="PDBsum" id="7A5I"/>
<dbReference type="PDBsum" id="7A5K"/>
<dbReference type="PDBsum" id="7L08"/>
<dbReference type="PDBsum" id="7OG4"/>
<dbReference type="PDBsum" id="7P2E"/>
<dbReference type="PDBsum" id="7PNX"/>
<dbReference type="PDBsum" id="7PNY"/>
<dbReference type="PDBsum" id="7PNZ"/>
<dbReference type="PDBsum" id="7PO0"/>
<dbReference type="PDBsum" id="7PO1"/>
<dbReference type="PDBsum" id="7PO2"/>
<dbReference type="PDBsum" id="7PO3"/>
<dbReference type="PDBsum" id="7QI4"/>
<dbReference type="PDBsum" id="7QI5"/>
<dbReference type="PDBsum" id="7QI6"/>
<dbReference type="PDBsum" id="8ANY"/>
<dbReference type="PDBsum" id="8CSP"/>
<dbReference type="PDBsum" id="8CSQ"/>
<dbReference type="PDBsum" id="8CSR"/>
<dbReference type="PDBsum" id="8CSS"/>
<dbReference type="PDBsum" id="8CST"/>
<dbReference type="PDBsum" id="8CSU"/>
<dbReference type="PDBsum" id="8K2A"/>
<dbReference type="PDBsum" id="8OIR"/>
<dbReference type="PDBsum" id="8OIS"/>
<dbReference type="PDBsum" id="8QRK"/>
<dbReference type="PDBsum" id="8QRL"/>
<dbReference type="PDBsum" id="8QRM"/>
<dbReference type="PDBsum" id="8QRN"/>
<dbReference type="PDBsum" id="8RRI"/>
<dbReference type="PDBsum" id="8XT0"/>
<dbReference type="PDBsum" id="8XT2"/>
<dbReference type="EMDB" id="EMD-0514"/>
<dbReference type="EMDB" id="EMD-0515"/>
<dbReference type="EMDB" id="EMD-10021"/>
<dbReference type="EMDB" id="EMD-10022"/>
<dbReference type="EMDB" id="EMD-11278"/>
<dbReference type="EMDB" id="EMD-11279"/>
<dbReference type="EMDB" id="EMD-11390"/>
<dbReference type="EMDB" id="EMD-11391"/>
<dbReference type="EMDB" id="EMD-11392"/>
<dbReference type="EMDB" id="EMD-11393"/>
<dbReference type="EMDB" id="EMD-11394"/>
<dbReference type="EMDB" id="EMD-11395"/>
<dbReference type="EMDB" id="EMD-11397"/>
<dbReference type="EMDB" id="EMD-11641"/>
<dbReference type="EMDB" id="EMD-11642"/>
<dbReference type="EMDB" id="EMD-11644"/>
<dbReference type="EMDB" id="EMD-12877"/>
<dbReference type="EMDB" id="EMD-13170"/>
<dbReference type="EMDB" id="EMD-13555"/>
<dbReference type="EMDB" id="EMD-13556"/>
<dbReference type="EMDB" id="EMD-13557"/>
<dbReference type="EMDB" id="EMD-13558"/>
<dbReference type="EMDB" id="EMD-13559"/>
<dbReference type="EMDB" id="EMD-13560"/>
<dbReference type="EMDB" id="EMD-13561"/>
<dbReference type="EMDB" id="EMD-13980"/>
<dbReference type="EMDB" id="EMD-13981"/>
<dbReference type="EMDB" id="EMD-13982"/>
<dbReference type="EMDB" id="EMD-15544"/>
<dbReference type="EMDB" id="EMD-16897"/>
<dbReference type="EMDB" id="EMD-16898"/>
<dbReference type="EMDB" id="EMD-19460"/>
<dbReference type="EMDB" id="EMD-21233"/>
<dbReference type="EMDB" id="EMD-21242"/>
<dbReference type="EMDB" id="EMD-23096"/>
<dbReference type="EMDB" id="EMD-26966"/>
<dbReference type="EMDB" id="EMD-26967"/>
<dbReference type="EMDB" id="EMD-36836"/>
<dbReference type="EMDB" id="EMD-38632"/>
<dbReference type="EMDB" id="EMD-38634"/>
<dbReference type="SMR" id="Q9Y2Q9"/>
<dbReference type="BioGRID" id="118784">
    <property type="interactions" value="238"/>
</dbReference>
<dbReference type="ComplexPortal" id="CPX-5225">
    <property type="entry name" value="28S mitochondrial small ribosomal subunit"/>
</dbReference>
<dbReference type="CORUM" id="Q9Y2Q9"/>
<dbReference type="FunCoup" id="Q9Y2Q9">
    <property type="interactions" value="568"/>
</dbReference>
<dbReference type="IntAct" id="Q9Y2Q9">
    <property type="interactions" value="78"/>
</dbReference>
<dbReference type="MINT" id="Q9Y2Q9"/>
<dbReference type="STRING" id="9606.ENSP00000276585"/>
<dbReference type="iPTMnet" id="Q9Y2Q9"/>
<dbReference type="MetOSite" id="Q9Y2Q9"/>
<dbReference type="PhosphoSitePlus" id="Q9Y2Q9"/>
<dbReference type="SwissPalm" id="Q9Y2Q9"/>
<dbReference type="BioMuta" id="MRPS28"/>
<dbReference type="DMDM" id="22001973"/>
<dbReference type="jPOST" id="Q9Y2Q9"/>
<dbReference type="MassIVE" id="Q9Y2Q9"/>
<dbReference type="PaxDb" id="9606-ENSP00000276585"/>
<dbReference type="PeptideAtlas" id="Q9Y2Q9"/>
<dbReference type="ProteomicsDB" id="85872"/>
<dbReference type="Pumba" id="Q9Y2Q9"/>
<dbReference type="TopDownProteomics" id="Q9Y2Q9"/>
<dbReference type="Antibodypedia" id="12414">
    <property type="antibodies" value="96 antibodies from 22 providers"/>
</dbReference>
<dbReference type="DNASU" id="28957"/>
<dbReference type="Ensembl" id="ENST00000276585.9">
    <property type="protein sequence ID" value="ENSP00000276585.4"/>
    <property type="gene ID" value="ENSG00000147586.10"/>
</dbReference>
<dbReference type="GeneID" id="28957"/>
<dbReference type="KEGG" id="hsa:28957"/>
<dbReference type="MANE-Select" id="ENST00000276585.9">
    <property type="protein sequence ID" value="ENSP00000276585.4"/>
    <property type="RefSeq nucleotide sequence ID" value="NM_014018.3"/>
    <property type="RefSeq protein sequence ID" value="NP_054737.1"/>
</dbReference>
<dbReference type="UCSC" id="uc003ybp.4">
    <property type="organism name" value="human"/>
</dbReference>
<dbReference type="AGR" id="HGNC:14513"/>
<dbReference type="CTD" id="28957"/>
<dbReference type="DisGeNET" id="28957"/>
<dbReference type="GeneCards" id="MRPS28"/>
<dbReference type="HGNC" id="HGNC:14513">
    <property type="gene designation" value="MRPS28"/>
</dbReference>
<dbReference type="HPA" id="ENSG00000147586">
    <property type="expression patterns" value="Low tissue specificity"/>
</dbReference>
<dbReference type="MalaCards" id="MRPS28"/>
<dbReference type="MIM" id="611990">
    <property type="type" value="gene"/>
</dbReference>
<dbReference type="MIM" id="618958">
    <property type="type" value="phenotype"/>
</dbReference>
<dbReference type="neXtProt" id="NX_Q9Y2Q9"/>
<dbReference type="PharmGKB" id="PA31016"/>
<dbReference type="VEuPathDB" id="HostDB:ENSG00000147586"/>
<dbReference type="eggNOG" id="KOG4078">
    <property type="taxonomic scope" value="Eukaryota"/>
</dbReference>
<dbReference type="GeneTree" id="ENSGT00390000001057"/>
<dbReference type="HOGENOM" id="CLU_109102_2_0_1"/>
<dbReference type="InParanoid" id="Q9Y2Q9"/>
<dbReference type="OMA" id="CVCSRPT"/>
<dbReference type="OrthoDB" id="6020229at2759"/>
<dbReference type="PAN-GO" id="Q9Y2Q9">
    <property type="GO annotations" value="1 GO annotation based on evolutionary models"/>
</dbReference>
<dbReference type="PhylomeDB" id="Q9Y2Q9"/>
<dbReference type="TreeFam" id="TF315097"/>
<dbReference type="PathwayCommons" id="Q9Y2Q9"/>
<dbReference type="Reactome" id="R-HSA-5368286">
    <property type="pathway name" value="Mitochondrial translation initiation"/>
</dbReference>
<dbReference type="Reactome" id="R-HSA-5389840">
    <property type="pathway name" value="Mitochondrial translation elongation"/>
</dbReference>
<dbReference type="Reactome" id="R-HSA-5419276">
    <property type="pathway name" value="Mitochondrial translation termination"/>
</dbReference>
<dbReference type="SignaLink" id="Q9Y2Q9"/>
<dbReference type="SIGNOR" id="Q9Y2Q9"/>
<dbReference type="BioGRID-ORCS" id="28957">
    <property type="hits" value="324 hits in 1166 CRISPR screens"/>
</dbReference>
<dbReference type="ChiTaRS" id="MRPS28">
    <property type="organism name" value="human"/>
</dbReference>
<dbReference type="GeneWiki" id="MRPS28"/>
<dbReference type="GenomeRNAi" id="28957"/>
<dbReference type="Pharos" id="Q9Y2Q9">
    <property type="development level" value="Tdark"/>
</dbReference>
<dbReference type="PRO" id="PR:Q9Y2Q9"/>
<dbReference type="Proteomes" id="UP000005640">
    <property type="component" value="Chromosome 8"/>
</dbReference>
<dbReference type="RNAct" id="Q9Y2Q9">
    <property type="molecule type" value="protein"/>
</dbReference>
<dbReference type="Bgee" id="ENSG00000147586">
    <property type="expression patterns" value="Expressed in adrenal tissue and 102 other cell types or tissues"/>
</dbReference>
<dbReference type="ExpressionAtlas" id="Q9Y2Q9">
    <property type="expression patterns" value="baseline and differential"/>
</dbReference>
<dbReference type="GO" id="GO:0005743">
    <property type="term" value="C:mitochondrial inner membrane"/>
    <property type="evidence" value="ECO:0000304"/>
    <property type="project" value="Reactome"/>
</dbReference>
<dbReference type="GO" id="GO:0005763">
    <property type="term" value="C:mitochondrial small ribosomal subunit"/>
    <property type="evidence" value="ECO:0000318"/>
    <property type="project" value="GO_Central"/>
</dbReference>
<dbReference type="GO" id="GO:0005739">
    <property type="term" value="C:mitochondrion"/>
    <property type="evidence" value="ECO:0000314"/>
    <property type="project" value="HPA"/>
</dbReference>
<dbReference type="GO" id="GO:0003723">
    <property type="term" value="F:RNA binding"/>
    <property type="evidence" value="ECO:0007005"/>
    <property type="project" value="UniProtKB"/>
</dbReference>
<dbReference type="GO" id="GO:0032543">
    <property type="term" value="P:mitochondrial translation"/>
    <property type="evidence" value="ECO:0000315"/>
    <property type="project" value="UniProtKB"/>
</dbReference>
<dbReference type="InterPro" id="IPR019375">
    <property type="entry name" value="Ribosomal_bS1m"/>
</dbReference>
<dbReference type="PANTHER" id="PTHR13447">
    <property type="entry name" value="MITOCHONDRIAL 28S RIBOSOMAL PROTEIN S28"/>
    <property type="match status" value="1"/>
</dbReference>
<dbReference type="PANTHER" id="PTHR13447:SF2">
    <property type="entry name" value="SMALL RIBOSOMAL SUBUNIT PROTEIN BS1M"/>
    <property type="match status" value="1"/>
</dbReference>
<dbReference type="Pfam" id="PF10246">
    <property type="entry name" value="MRP-S35"/>
    <property type="match status" value="1"/>
</dbReference>
<comment type="subunit">
    <text evidence="3 4">Component of the mitochondrial small ribosomal subunit (mt-SSU) (PubMed:30566640). Mature mammalian 55S mitochondrial ribosomes consist of a small (28S) and a large (39S) subunit. The 28S small subunit contains a 12S ribosomal RNA (12S mt-rRNA) and 30 different proteins. The 39S large subunit contains a 16S rRNA (16S mt-rRNA), a copy of mitochondrial valine transfer RNA (mt-tRNA(Val)), which plays an integral structural role, and 52 different proteins.</text>
</comment>
<comment type="subcellular location">
    <subcellularLocation>
        <location evidence="3">Mitochondrion</location>
    </subcellularLocation>
</comment>
<comment type="disease" evidence="4">
    <disease id="DI-05882">
        <name>Combined oxidative phosphorylation deficiency 47</name>
        <acronym>COXPD47</acronym>
        <description>An autosomal recessive, multisystemic, mitochondrial disorder characterized by intrauterine growth retardation, swallowing difficulties with failure to thrive, hypoglycemia, dehydration, and hepatomegaly. Additional features include global developmental delay with impaired intellectual development and absent speech, microcephaly, facial dysmorphism, cataract, sensorineural deafness, skeletal features, and cryptorchidism. Laboratory studies show metabolic acidosis, increased serum lactate, and variably impaired activity of mitochondrial respiratory complexes I, III, IV, and V in different tissues.</description>
        <dbReference type="MIM" id="618958"/>
    </disease>
    <text>The disease is caused by variants affecting the gene represented in this entry.</text>
</comment>
<comment type="similarity">
    <text evidence="6">Belongs to the bacterial ribosomal protein bS1 family.</text>
</comment>